<feature type="signal peptide" evidence="5">
    <location>
        <begin position="1"/>
        <end position="17"/>
    </location>
</feature>
<feature type="chain" id="PRO_0000007508" description="Delta-like protein 1">
    <location>
        <begin position="18"/>
        <end position="714"/>
    </location>
</feature>
<feature type="topological domain" description="Extracellular" evidence="5">
    <location>
        <begin position="18"/>
        <end position="537"/>
    </location>
</feature>
<feature type="transmembrane region" description="Helical" evidence="5">
    <location>
        <begin position="538"/>
        <end position="560"/>
    </location>
</feature>
<feature type="topological domain" description="Cytoplasmic" evidence="5">
    <location>
        <begin position="561"/>
        <end position="714"/>
    </location>
</feature>
<feature type="domain" description="DSL" evidence="7">
    <location>
        <begin position="176"/>
        <end position="220"/>
    </location>
</feature>
<feature type="domain" description="EGF-like 1" evidence="6">
    <location>
        <begin position="225"/>
        <end position="253"/>
    </location>
</feature>
<feature type="domain" description="EGF-like 2" evidence="6">
    <location>
        <begin position="256"/>
        <end position="284"/>
    </location>
</feature>
<feature type="domain" description="EGF-like 3" evidence="6">
    <location>
        <begin position="291"/>
        <end position="324"/>
    </location>
</feature>
<feature type="domain" description="EGF-like 4; calcium-binding" evidence="6">
    <location>
        <begin position="331"/>
        <end position="362"/>
    </location>
</feature>
<feature type="domain" description="EGF-like 5" evidence="6">
    <location>
        <begin position="369"/>
        <end position="401"/>
    </location>
</feature>
<feature type="domain" description="EGF-like 6" evidence="6">
    <location>
        <begin position="408"/>
        <end position="439"/>
    </location>
</feature>
<feature type="domain" description="EGF-like 7; calcium-binding" evidence="6">
    <location>
        <begin position="446"/>
        <end position="477"/>
    </location>
</feature>
<feature type="domain" description="EGF-like 8" evidence="6">
    <location>
        <begin position="484"/>
        <end position="515"/>
    </location>
</feature>
<feature type="region of interest" description="Disordered" evidence="8">
    <location>
        <begin position="644"/>
        <end position="690"/>
    </location>
</feature>
<feature type="region of interest" description="Interaction with MAGI1" evidence="4">
    <location>
        <begin position="711"/>
        <end position="714"/>
    </location>
</feature>
<feature type="compositionally biased region" description="Basic and acidic residues" evidence="8">
    <location>
        <begin position="644"/>
        <end position="656"/>
    </location>
</feature>
<feature type="modified residue" description="Phosphothreonine" evidence="4">
    <location>
        <position position="630"/>
    </location>
</feature>
<feature type="modified residue" description="Phosphoserine; by PKB" evidence="4">
    <location>
        <position position="685"/>
    </location>
</feature>
<feature type="modified residue" description="Phosphoserine" evidence="4">
    <location>
        <position position="688"/>
    </location>
</feature>
<feature type="glycosylation site" description="N-linked (GlcNAc...) asparagine" evidence="5">
    <location>
        <position position="476"/>
    </location>
</feature>
<feature type="disulfide bond" evidence="1">
    <location>
        <begin position="178"/>
        <end position="187"/>
    </location>
</feature>
<feature type="disulfide bond" evidence="1">
    <location>
        <begin position="191"/>
        <end position="203"/>
    </location>
</feature>
<feature type="disulfide bond" evidence="1">
    <location>
        <begin position="211"/>
        <end position="220"/>
    </location>
</feature>
<feature type="disulfide bond" evidence="1">
    <location>
        <begin position="225"/>
        <end position="236"/>
    </location>
</feature>
<feature type="disulfide bond" evidence="1">
    <location>
        <begin position="229"/>
        <end position="242"/>
    </location>
</feature>
<feature type="disulfide bond" evidence="1">
    <location>
        <begin position="244"/>
        <end position="253"/>
    </location>
</feature>
<feature type="disulfide bond" evidence="1">
    <location>
        <begin position="256"/>
        <end position="267"/>
    </location>
</feature>
<feature type="disulfide bond" evidence="1">
    <location>
        <begin position="262"/>
        <end position="273"/>
    </location>
</feature>
<feature type="disulfide bond" evidence="1">
    <location>
        <begin position="275"/>
        <end position="284"/>
    </location>
</feature>
<feature type="disulfide bond" evidence="1">
    <location>
        <begin position="291"/>
        <end position="303"/>
    </location>
</feature>
<feature type="disulfide bond" evidence="1">
    <location>
        <begin position="297"/>
        <end position="313"/>
    </location>
</feature>
<feature type="disulfide bond" evidence="1">
    <location>
        <begin position="315"/>
        <end position="324"/>
    </location>
</feature>
<feature type="disulfide bond" evidence="1">
    <location>
        <begin position="331"/>
        <end position="342"/>
    </location>
</feature>
<feature type="disulfide bond" evidence="1">
    <location>
        <begin position="336"/>
        <end position="351"/>
    </location>
</feature>
<feature type="disulfide bond" evidence="1">
    <location>
        <begin position="353"/>
        <end position="362"/>
    </location>
</feature>
<feature type="disulfide bond" evidence="1">
    <location>
        <begin position="369"/>
        <end position="380"/>
    </location>
</feature>
<feature type="disulfide bond" evidence="1">
    <location>
        <begin position="374"/>
        <end position="390"/>
    </location>
</feature>
<feature type="disulfide bond" evidence="1">
    <location>
        <begin position="392"/>
        <end position="401"/>
    </location>
</feature>
<feature type="disulfide bond" evidence="1">
    <location>
        <begin position="408"/>
        <end position="419"/>
    </location>
</feature>
<feature type="disulfide bond" evidence="1">
    <location>
        <begin position="413"/>
        <end position="428"/>
    </location>
</feature>
<feature type="disulfide bond" evidence="1">
    <location>
        <begin position="430"/>
        <end position="439"/>
    </location>
</feature>
<feature type="disulfide bond" evidence="1">
    <location>
        <begin position="446"/>
        <end position="457"/>
    </location>
</feature>
<feature type="disulfide bond" evidence="1">
    <location>
        <begin position="451"/>
        <end position="466"/>
    </location>
</feature>
<feature type="disulfide bond" evidence="1">
    <location>
        <begin position="468"/>
        <end position="477"/>
    </location>
</feature>
<feature type="disulfide bond" evidence="1">
    <location>
        <begin position="484"/>
        <end position="495"/>
    </location>
</feature>
<feature type="disulfide bond" evidence="1">
    <location>
        <begin position="489"/>
        <end position="504"/>
    </location>
</feature>
<feature type="disulfide bond" evidence="1">
    <location>
        <begin position="506"/>
        <end position="515"/>
    </location>
</feature>
<feature type="cross-link" description="Glycyl lysine isopeptide (Lys-Gly) (interchain with G-Cter in ubiquitin)" evidence="4">
    <location>
        <position position="605"/>
    </location>
</feature>
<keyword id="KW-0965">Cell junction</keyword>
<keyword id="KW-1003">Cell membrane</keyword>
<keyword id="KW-0217">Developmental protein</keyword>
<keyword id="KW-0221">Differentiation</keyword>
<keyword id="KW-1015">Disulfide bond</keyword>
<keyword id="KW-0245">EGF-like domain</keyword>
<keyword id="KW-0325">Glycoprotein</keyword>
<keyword id="KW-1017">Isopeptide bond</keyword>
<keyword id="KW-0472">Membrane</keyword>
<keyword id="KW-0914">Notch signaling pathway</keyword>
<keyword id="KW-0597">Phosphoprotein</keyword>
<keyword id="KW-1185">Reference proteome</keyword>
<keyword id="KW-0677">Repeat</keyword>
<keyword id="KW-0732">Signal</keyword>
<keyword id="KW-0812">Transmembrane</keyword>
<keyword id="KW-1133">Transmembrane helix</keyword>
<keyword id="KW-0832">Ubl conjugation</keyword>
<sequence length="714" mass="77379">MGRRSALALAVVSALLCQVWSSGVFELKLQEFVNKKGLLGNRNCCRGGSGPPCACRTFFRVCLKHYQASVSPEPPCTYGSAVTAVLGVDSFSLPDGAGIDPAFSNPIRFPFGFTWPGTFSLIIEALHTDSPDDLATENPERLISRLTTQRHLTVGEEWSQDLHSSGRTDLRYSYRFVCDEHYYGEGCSVFCRPRDDAFGHFTCGERGEKMCDPGWKGQYCTDPICLPGCDDQHGYCDKPGECKCRVGWQGRYCDECIRYPGCLHGTCQQPWQCNCQEGWGGLFCNQDLNYCTHHKPCRNGATCTNTGQGSYTCSCRPGYTGANCELEVDECAPSPCRNGGSCTDLEDSYSCTCPPGFYGKVCELSAMTCADGPCFNGGRCSDNPDGGYTCHCPAGFSGFNCEKKIDLCSSSPCSNGAKCVDLGNSYLCRCQTGFSGRYCEDNVDDCASSPCANGGTCRDSVNDFSCTCPPGYTGRNCSAPVSRCEHAPCHNGATCHQRGQRYMCECAQGYGGANCQFLLPEPPPDLIVAAQGGSFPWVAVCAGVVLVLLLLLGCAAVVVCVRLKLQKHQPPPDPCGGETETMNNLANCQREKDVSVSIIGATQIKNTNKKADFHGDHGADKSSFKARYPTVDYNLIRDLKGDEATVRDAHSKRDTKCQSQGSVGEEKSTSTLRGGEVPDRKRPESVYSTSKDTKYQSVYVLSAEKDECVIATEV</sequence>
<reference key="1">
    <citation type="submission" date="1996-12" db="EMBL/GenBank/DDBJ databases">
        <authorList>
            <person name="Disibio G."/>
            <person name="Hebshi L."/>
            <person name="Boulter J."/>
            <person name="Weinmaster G."/>
        </authorList>
    </citation>
    <scope>NUCLEOTIDE SEQUENCE [MRNA]</scope>
</reference>
<reference key="2">
    <citation type="journal article" date="2002" name="J. Biol. Chem.">
        <title>Notch ligands are substrates for protein O-fucosyltransferase-1 and Fringe.</title>
        <authorList>
            <person name="Panin V.M."/>
            <person name="Shao L."/>
            <person name="Lei L."/>
            <person name="Moloney D.J."/>
            <person name="Irvine K.D."/>
            <person name="Haltiwanger R.S."/>
        </authorList>
    </citation>
    <scope>GLYCOSYLATION</scope>
</reference>
<reference key="3">
    <citation type="journal article" date="2012" name="Dev. Cell">
        <title>Notch ligand endocytosis generates mechanical pulling force dependent on dynamin, epsins, and actin.</title>
        <authorList>
            <person name="Meloty-Kapella L."/>
            <person name="Shergill B."/>
            <person name="Kuon J."/>
            <person name="Botvinick E."/>
            <person name="Weinmaster G."/>
        </authorList>
    </citation>
    <scope>FUNCTION</scope>
    <scope>INTERACTION WITH EPN1</scope>
</reference>
<reference key="4">
    <citation type="journal article" date="2017" name="Dev. Cell">
        <title>Deciphering the fringe-mediated notch code: identification of activating and inhibiting sites allowing discrimination between ligands.</title>
        <authorList>
            <person name="Kakuda S."/>
            <person name="Haltiwanger R.S."/>
        </authorList>
    </citation>
    <scope>INTERACTION WITH NOTCH1</scope>
</reference>
<accession>P97677</accession>
<comment type="function">
    <text evidence="2 4 10">Transmembrane ligand protein of NOTCH1, NOTCH2 and NOTCH3 receptors that binds the extracellular domain (ECD) of Notch receptor in a cis and trans fashion manner (By similarity). Following transinteraction, ligand cells produce mechanical force that depends of a clathrin-mediated endocytosis, requiring ligand ubiquitination, EPN1 interaction, and actin polymerisation; these events promote Notch receptor extracellular domain (NECD) transendocytosis and triggers Notch signaling through induction of cleavage, hyperphosphorylation, and nuclear accumulation of the intracellular domain of Notch receptors (NICD) (PubMed:22658936). Is required for embryonic development and maintenance of adult stem cells in many different tissues and immune systeme; the DLL1-induced Notch signaling is mediated through an intercellular communication that regulates cell lineage, cell specification, cell patterning and morphogenesis through effects on differentiation and proliferation (By similarity). Plays a role in brain development at different level, namely by regulating neuronal differentiation of neural precursor cells via cell-cell interaction, most likely through the lateral inhibitory system in an endogenous level dependent-manner. During neocortex development, Dll1-Notch signaling transmission is mediated by dynamic interactions between intermediate neurogenic progenitors and radial glia; the cell-cell interactions are mediated via dynamic and transient elongation processes, likely to reactivate/maintain Notch activity in neighboring progenitors, and coordinate progenitor cell division and differentiation across radial and zonal boundaries. During cerebellar development, regulates Bergmann glial monolayer formation and its morphological maturation through a Notch signaling pathway. At the retina and spinal cord level, regulates neurogenesis by preventing the premature differentiation of neural progenitors and also by maintaining progenitors in spinal cord through Notch signaling pathway. Also controls neurogenesis of the neural tube in a progenitor domain-specific fashion along the dorsoventral axis. Maintains quiescence of neural stem cells and plays a role as a fate determinant that segregates asymmetrically to one daughter cell during neural stem cells mitosis, resulting in neuronal differentiation in Dll1-inheriting cell. Plays a role in immune systeme development, namely the development of all T-cells and marginal zone (MZ) B cells (By similarity). Blocks the differentiation of progenitor cells into the B-cell lineage while promoting the emergence of a population of cells with the characteristics of a T-cell/NK-cell precursor (By similarity). Also plays a role during muscle development. During early development, inhibits myoblasts differentiation from the medial dermomyotomal lip and later regulates progenitor cell differentiation. Directly modulates cell adhesion and basal lamina formation in satellite cells through Notch signaling. Maintains myogenic progenitors pool by suppressing differentiation through down-regulation of MYOD1 and is required for satellite cell homing and PAX7 expression. During craniofacial and trunk myogenesis suppresses differentiation of cranial mesoderm-derived and somite-derived muscle via MYOD1 regulation but in cranial mesoderm-derived progenitors, is neither required for satellite cell homing nor for PAX7 expression. Also plays a role during pancreatic cell development. During type B pancreatic cell development, may be involved in the initiation of proximodistal patterning in the early pancreatic epithelium. Stimulates multipotent pancreatic progenitor cells proliferation and pancreatic growth by maintaining HES1 expression and PTF1A protein levels. During fetal stages of development, is required to maintain arterial identity and the responsiveness of arterial endothelial cells for VEGFA through regulation of KDR activation and NRP1 expression. Controls sprouting angiogenesis and subsequent vertical branch formation through regulation on tip cell differentiation. Negatively regulates goblet cell differentiation in intestine and controls secretory fat commitment through lateral inhibition in small intestine. Plays a role during inner ear development; negatively regulates auditory hair cell differentiation. Plays a role during nephron development through Notch signaling pathway. Regulates growth, blood pressure and energy homeostasis (By similarity).</text>
</comment>
<comment type="subunit">
    <text evidence="2 4 10 11">Homodimer. Interacts with TJP1. Interacts with MAGI1 (via PDZ domain); forms a complex with CTNNB1 and CDH2 and promotes recruitment to the adherens junction and stabilization on the cell surface. Interacts with PSEN1; undergoes a presenilin-dependent gamma-secretase cleavage that releases a Dll1-intracellular form. Interacts with MFAP5. Interacts with MIB1. Interacts with NEURL1B; leads to ubiquitination. Interacts with NEURL1 (By similarity). Interacts with SYNJ2BP; enhances DLL1 protein stability, and promotes Notch signaling in endothelial cells. Interacts with MAGI1, MAGI2, MAGI3 and MPDZ (By similarity). Interacts (via ubiquitin) with EPN1 (via IUM domain); binding with NOTCH1 attached to neighboring cell, promotes ligand ubiquitination and EPN1 interaction, leading to NECD transendocytosis and Notch signaling (PubMed:22658936). Interacts with NOTCH1 (PubMed:28089369).</text>
</comment>
<comment type="subcellular location">
    <subcellularLocation>
        <location evidence="4">Apical cell membrane</location>
        <topology evidence="4">Single-pass type I membrane protein</topology>
    </subcellularLocation>
    <subcellularLocation>
        <location evidence="4">Cell junction</location>
        <location evidence="4">Adherens junction</location>
    </subcellularLocation>
    <subcellularLocation>
        <location evidence="4">Membrane raft</location>
    </subcellularLocation>
    <text evidence="4">Distributed around adherens junction in the apical endfeet through interactions with MAGI1.</text>
</comment>
<comment type="PTM">
    <text evidence="3 4">Ubiquitinated by MIB (MIB1 or MIB2), leading to its endocytosis and subsequent degradation (By similarity). Ubiquitinated; promotes recycling back to the plasma membrane and confers a strong affinity for NOTCH1. Mono- and multi-ubiquitinated. Multi-ubiquitination of Lys-605 by MIB1 promotes both cis and trans-interaction with NOTCH1, as well as activation of Notch signaling. Ubiquitinated by NEURL1B (By similarity).</text>
</comment>
<comment type="PTM">
    <text evidence="4">Phosphorylated in a membrane association-dependent manner. Phosphorylation at Ser-688 requires the presence of Ser-685, whereas phosphorylation at Thr-630 and Ser-685 occur independently of the other sites. Phosphorylation is required for full ligand activity in vitro and affects surface presentation, ectodomain shedding, and endocytosis.</text>
</comment>
<comment type="PTM">
    <text evidence="9">O-fucosylated. Can be elongated to a disaccharide by MFNG.</text>
</comment>
<proteinExistence type="evidence at protein level"/>
<name>DLL1_RAT</name>
<organism>
    <name type="scientific">Rattus norvegicus</name>
    <name type="common">Rat</name>
    <dbReference type="NCBI Taxonomy" id="10116"/>
    <lineage>
        <taxon>Eukaryota</taxon>
        <taxon>Metazoa</taxon>
        <taxon>Chordata</taxon>
        <taxon>Craniata</taxon>
        <taxon>Vertebrata</taxon>
        <taxon>Euteleostomi</taxon>
        <taxon>Mammalia</taxon>
        <taxon>Eutheria</taxon>
        <taxon>Euarchontoglires</taxon>
        <taxon>Glires</taxon>
        <taxon>Rodentia</taxon>
        <taxon>Myomorpha</taxon>
        <taxon>Muroidea</taxon>
        <taxon>Muridae</taxon>
        <taxon>Murinae</taxon>
        <taxon>Rattus</taxon>
    </lineage>
</organism>
<protein>
    <recommendedName>
        <fullName>Delta-like protein 1</fullName>
    </recommendedName>
    <alternativeName>
        <fullName>Drosophila Delta homolog 1</fullName>
        <shortName>Delta1</shortName>
    </alternativeName>
</protein>
<dbReference type="EMBL" id="U78889">
    <property type="protein sequence ID" value="AAB37343.1"/>
    <property type="molecule type" value="mRNA"/>
</dbReference>
<dbReference type="RefSeq" id="NP_114452.1">
    <property type="nucleotide sequence ID" value="NM_032063.2"/>
</dbReference>
<dbReference type="SMR" id="P97677"/>
<dbReference type="BioGRID" id="249876">
    <property type="interactions" value="3"/>
</dbReference>
<dbReference type="FunCoup" id="P97677">
    <property type="interactions" value="528"/>
</dbReference>
<dbReference type="IntAct" id="P97677">
    <property type="interactions" value="2"/>
</dbReference>
<dbReference type="STRING" id="10116.ENSRNOP00000073159"/>
<dbReference type="GlyCosmos" id="P97677">
    <property type="glycosylation" value="1 site, No reported glycans"/>
</dbReference>
<dbReference type="GlyGen" id="P97677">
    <property type="glycosylation" value="1 site"/>
</dbReference>
<dbReference type="iPTMnet" id="P97677"/>
<dbReference type="PhosphoSitePlus" id="P97677"/>
<dbReference type="PaxDb" id="10116-ENSRNOP00000019934"/>
<dbReference type="GeneID" id="84010"/>
<dbReference type="KEGG" id="rno:84010"/>
<dbReference type="UCSC" id="RGD:70949">
    <property type="organism name" value="rat"/>
</dbReference>
<dbReference type="AGR" id="RGD:70949"/>
<dbReference type="CTD" id="28514"/>
<dbReference type="RGD" id="70949">
    <property type="gene designation" value="Dll1"/>
</dbReference>
<dbReference type="eggNOG" id="KOG1217">
    <property type="taxonomic scope" value="Eukaryota"/>
</dbReference>
<dbReference type="InParanoid" id="P97677"/>
<dbReference type="PhylomeDB" id="P97677"/>
<dbReference type="Reactome" id="R-RNO-2979096">
    <property type="pathway name" value="NOTCH2 Activation and Transmission of Signal to the Nucleus"/>
</dbReference>
<dbReference type="Reactome" id="R-RNO-9013507">
    <property type="pathway name" value="NOTCH3 Activation and Transmission of Signal to the Nucleus"/>
</dbReference>
<dbReference type="PRO" id="PR:P97677"/>
<dbReference type="Proteomes" id="UP000002494">
    <property type="component" value="Unplaced"/>
</dbReference>
<dbReference type="GO" id="GO:0005912">
    <property type="term" value="C:adherens junction"/>
    <property type="evidence" value="ECO:0000250"/>
    <property type="project" value="UniProtKB"/>
</dbReference>
<dbReference type="GO" id="GO:0016324">
    <property type="term" value="C:apical plasma membrane"/>
    <property type="evidence" value="ECO:0000250"/>
    <property type="project" value="UniProtKB"/>
</dbReference>
<dbReference type="GO" id="GO:0031410">
    <property type="term" value="C:cytoplasmic vesicle"/>
    <property type="evidence" value="ECO:0000266"/>
    <property type="project" value="RGD"/>
</dbReference>
<dbReference type="GO" id="GO:0045121">
    <property type="term" value="C:membrane raft"/>
    <property type="evidence" value="ECO:0000250"/>
    <property type="project" value="UniProtKB"/>
</dbReference>
<dbReference type="GO" id="GO:0005886">
    <property type="term" value="C:plasma membrane"/>
    <property type="evidence" value="ECO:0000266"/>
    <property type="project" value="RGD"/>
</dbReference>
<dbReference type="GO" id="GO:0005509">
    <property type="term" value="F:calcium ion binding"/>
    <property type="evidence" value="ECO:0007669"/>
    <property type="project" value="InterPro"/>
</dbReference>
<dbReference type="GO" id="GO:0005112">
    <property type="term" value="F:Notch binding"/>
    <property type="evidence" value="ECO:0000353"/>
    <property type="project" value="UniProtKB"/>
</dbReference>
<dbReference type="GO" id="GO:0048018">
    <property type="term" value="F:receptor ligand activity"/>
    <property type="evidence" value="ECO:0000266"/>
    <property type="project" value="RGD"/>
</dbReference>
<dbReference type="GO" id="GO:0097110">
    <property type="term" value="F:scaffold protein binding"/>
    <property type="evidence" value="ECO:0000266"/>
    <property type="project" value="RGD"/>
</dbReference>
<dbReference type="GO" id="GO:0030957">
    <property type="term" value="F:Tat protein binding"/>
    <property type="evidence" value="ECO:0000266"/>
    <property type="project" value="RGD"/>
</dbReference>
<dbReference type="GO" id="GO:0014002">
    <property type="term" value="P:astrocyte development"/>
    <property type="evidence" value="ECO:0000250"/>
    <property type="project" value="UniProtKB"/>
</dbReference>
<dbReference type="GO" id="GO:0009912">
    <property type="term" value="P:auditory receptor cell fate commitment"/>
    <property type="evidence" value="ECO:0000303"/>
    <property type="project" value="UniProtKB"/>
</dbReference>
<dbReference type="GO" id="GO:0001709">
    <property type="term" value="P:cell fate determination"/>
    <property type="evidence" value="ECO:0000304"/>
    <property type="project" value="RGD"/>
</dbReference>
<dbReference type="GO" id="GO:0007267">
    <property type="term" value="P:cell-cell signaling"/>
    <property type="evidence" value="ECO:0000266"/>
    <property type="project" value="RGD"/>
</dbReference>
<dbReference type="GO" id="GO:0021688">
    <property type="term" value="P:cerebellar molecular layer formation"/>
    <property type="evidence" value="ECO:0000250"/>
    <property type="project" value="UniProtKB"/>
</dbReference>
<dbReference type="GO" id="GO:0021693">
    <property type="term" value="P:cerebellar Purkinje cell layer structural organization"/>
    <property type="evidence" value="ECO:0000250"/>
    <property type="project" value="UniProtKB"/>
</dbReference>
<dbReference type="GO" id="GO:0072583">
    <property type="term" value="P:clathrin-dependent endocytosis"/>
    <property type="evidence" value="ECO:0000314"/>
    <property type="project" value="UniProtKB"/>
</dbReference>
<dbReference type="GO" id="GO:0007386">
    <property type="term" value="P:compartment pattern specification"/>
    <property type="evidence" value="ECO:0000266"/>
    <property type="project" value="RGD"/>
</dbReference>
<dbReference type="GO" id="GO:0007368">
    <property type="term" value="P:determination of left/right symmetry"/>
    <property type="evidence" value="ECO:0000266"/>
    <property type="project" value="RGD"/>
</dbReference>
<dbReference type="GO" id="GO:0097102">
    <property type="term" value="P:endothelial tip cell fate specification"/>
    <property type="evidence" value="ECO:0000250"/>
    <property type="project" value="UniProtKB"/>
</dbReference>
<dbReference type="GO" id="GO:0097009">
    <property type="term" value="P:energy homeostasis"/>
    <property type="evidence" value="ECO:0000250"/>
    <property type="project" value="UniProtKB"/>
</dbReference>
<dbReference type="GO" id="GO:0001947">
    <property type="term" value="P:heart looping"/>
    <property type="evidence" value="ECO:0000266"/>
    <property type="project" value="RGD"/>
</dbReference>
<dbReference type="GO" id="GO:0002085">
    <property type="term" value="P:inhibition of neuroepithelial cell differentiation"/>
    <property type="evidence" value="ECO:0000266"/>
    <property type="project" value="RGD"/>
</dbReference>
<dbReference type="GO" id="GO:0042491">
    <property type="term" value="P:inner ear auditory receptor cell differentiation"/>
    <property type="evidence" value="ECO:0000266"/>
    <property type="project" value="RGD"/>
</dbReference>
<dbReference type="GO" id="GO:0048839">
    <property type="term" value="P:inner ear development"/>
    <property type="evidence" value="ECO:0000266"/>
    <property type="project" value="RGD"/>
</dbReference>
<dbReference type="GO" id="GO:0046331">
    <property type="term" value="P:lateral inhibition"/>
    <property type="evidence" value="ECO:0000250"/>
    <property type="project" value="UniProtKB"/>
</dbReference>
<dbReference type="GO" id="GO:0070986">
    <property type="term" value="P:left/right axis specification"/>
    <property type="evidence" value="ECO:0000266"/>
    <property type="project" value="RGD"/>
</dbReference>
<dbReference type="GO" id="GO:0072070">
    <property type="term" value="P:loop of Henle development"/>
    <property type="evidence" value="ECO:0000266"/>
    <property type="project" value="RGD"/>
</dbReference>
<dbReference type="GO" id="GO:0002315">
    <property type="term" value="P:marginal zone B cell differentiation"/>
    <property type="evidence" value="ECO:0000250"/>
    <property type="project" value="UniProtKB"/>
</dbReference>
<dbReference type="GO" id="GO:0030099">
    <property type="term" value="P:myeloid cell differentiation"/>
    <property type="evidence" value="ECO:0000266"/>
    <property type="project" value="RGD"/>
</dbReference>
<dbReference type="GO" id="GO:2000726">
    <property type="term" value="P:negative regulation of cardiac muscle cell differentiation"/>
    <property type="evidence" value="ECO:0000266"/>
    <property type="project" value="RGD"/>
</dbReference>
<dbReference type="GO" id="GO:0045596">
    <property type="term" value="P:negative regulation of cell differentiation"/>
    <property type="evidence" value="ECO:0000250"/>
    <property type="project" value="UniProtKB"/>
</dbReference>
<dbReference type="GO" id="GO:0008285">
    <property type="term" value="P:negative regulation of cell population proliferation"/>
    <property type="evidence" value="ECO:0000250"/>
    <property type="project" value="UniProtKB"/>
</dbReference>
<dbReference type="GO" id="GO:0045605">
    <property type="term" value="P:negative regulation of epidermal cell differentiation"/>
    <property type="evidence" value="ECO:0000250"/>
    <property type="project" value="UniProtKB"/>
</dbReference>
<dbReference type="GO" id="GO:0030857">
    <property type="term" value="P:negative regulation of epithelial cell differentiation"/>
    <property type="evidence" value="ECO:0000250"/>
    <property type="project" value="UniProtKB"/>
</dbReference>
<dbReference type="GO" id="GO:0034351">
    <property type="term" value="P:negative regulation of glial cell apoptotic process"/>
    <property type="evidence" value="ECO:0000250"/>
    <property type="project" value="UniProtKB"/>
</dbReference>
<dbReference type="GO" id="GO:0045608">
    <property type="term" value="P:negative regulation of inner ear auditory receptor cell differentiation"/>
    <property type="evidence" value="ECO:0000266"/>
    <property type="project" value="RGD"/>
</dbReference>
<dbReference type="GO" id="GO:0032693">
    <property type="term" value="P:negative regulation of interleukin-10 production"/>
    <property type="evidence" value="ECO:0000266"/>
    <property type="project" value="RGD"/>
</dbReference>
<dbReference type="GO" id="GO:0045638">
    <property type="term" value="P:negative regulation of myeloid cell differentiation"/>
    <property type="evidence" value="ECO:0000266"/>
    <property type="project" value="RGD"/>
</dbReference>
<dbReference type="GO" id="GO:0045662">
    <property type="term" value="P:negative regulation of myoblast differentiation"/>
    <property type="evidence" value="ECO:0000250"/>
    <property type="project" value="UniProtKB"/>
</dbReference>
<dbReference type="GO" id="GO:0045665">
    <property type="term" value="P:negative regulation of neuron differentiation"/>
    <property type="evidence" value="ECO:0000250"/>
    <property type="project" value="UniProtKB"/>
</dbReference>
<dbReference type="GO" id="GO:0045746">
    <property type="term" value="P:negative regulation of Notch signaling pathway"/>
    <property type="evidence" value="ECO:0000318"/>
    <property type="project" value="GO_Central"/>
</dbReference>
<dbReference type="GO" id="GO:0072006">
    <property type="term" value="P:nephron development"/>
    <property type="evidence" value="ECO:0000250"/>
    <property type="project" value="UniProtKB"/>
</dbReference>
<dbReference type="GO" id="GO:0007399">
    <property type="term" value="P:nervous system development"/>
    <property type="evidence" value="ECO:0000303"/>
    <property type="project" value="UniProtKB"/>
</dbReference>
<dbReference type="GO" id="GO:0060563">
    <property type="term" value="P:neuroepithelial cell differentiation"/>
    <property type="evidence" value="ECO:0000266"/>
    <property type="project" value="RGD"/>
</dbReference>
<dbReference type="GO" id="GO:0030182">
    <property type="term" value="P:neuron differentiation"/>
    <property type="evidence" value="ECO:0000266"/>
    <property type="project" value="RGD"/>
</dbReference>
<dbReference type="GO" id="GO:0048665">
    <property type="term" value="P:neuron fate specification"/>
    <property type="evidence" value="ECO:0000250"/>
    <property type="project" value="UniProtKB"/>
</dbReference>
<dbReference type="GO" id="GO:0097150">
    <property type="term" value="P:neuronal stem cell population maintenance"/>
    <property type="evidence" value="ECO:0000250"/>
    <property type="project" value="UniProtKB"/>
</dbReference>
<dbReference type="GO" id="GO:0007219">
    <property type="term" value="P:Notch signaling pathway"/>
    <property type="evidence" value="ECO:0000250"/>
    <property type="project" value="UniProtKB"/>
</dbReference>
<dbReference type="GO" id="GO:0060853">
    <property type="term" value="P:Notch signaling pathway involved in arterial endothelial cell fate commitment"/>
    <property type="evidence" value="ECO:0000250"/>
    <property type="project" value="UniProtKB"/>
</dbReference>
<dbReference type="GO" id="GO:0035265">
    <property type="term" value="P:organ growth"/>
    <property type="evidence" value="ECO:0000250"/>
    <property type="project" value="UniProtKB"/>
</dbReference>
<dbReference type="GO" id="GO:0008284">
    <property type="term" value="P:positive regulation of cell population proliferation"/>
    <property type="evidence" value="ECO:0000250"/>
    <property type="project" value="UniProtKB"/>
</dbReference>
<dbReference type="GO" id="GO:0045807">
    <property type="term" value="P:positive regulation of endocytosis"/>
    <property type="evidence" value="ECO:0000250"/>
    <property type="project" value="UniProtKB"/>
</dbReference>
<dbReference type="GO" id="GO:0010628">
    <property type="term" value="P:positive regulation of gene expression"/>
    <property type="evidence" value="ECO:0000266"/>
    <property type="project" value="RGD"/>
</dbReference>
<dbReference type="GO" id="GO:0045747">
    <property type="term" value="P:positive regulation of Notch signaling pathway"/>
    <property type="evidence" value="ECO:0000314"/>
    <property type="project" value="UniProtKB"/>
</dbReference>
<dbReference type="GO" id="GO:0048633">
    <property type="term" value="P:positive regulation of skeletal muscle tissue growth"/>
    <property type="evidence" value="ECO:0000250"/>
    <property type="project" value="UniProtKB"/>
</dbReference>
<dbReference type="GO" id="GO:1903672">
    <property type="term" value="P:positive regulation of sprouting angiogenesis"/>
    <property type="evidence" value="ECO:0000250"/>
    <property type="project" value="UniProtKB"/>
</dbReference>
<dbReference type="GO" id="GO:0045944">
    <property type="term" value="P:positive regulation of transcription by RNA polymerase II"/>
    <property type="evidence" value="ECO:0000266"/>
    <property type="project" value="RGD"/>
</dbReference>
<dbReference type="GO" id="GO:0072014">
    <property type="term" value="P:proximal tubule development"/>
    <property type="evidence" value="ECO:0000266"/>
    <property type="project" value="RGD"/>
</dbReference>
<dbReference type="GO" id="GO:0009954">
    <property type="term" value="P:proximal/distal pattern formation"/>
    <property type="evidence" value="ECO:0000250"/>
    <property type="project" value="UniProtKB"/>
</dbReference>
<dbReference type="GO" id="GO:0008217">
    <property type="term" value="P:regulation of blood pressure"/>
    <property type="evidence" value="ECO:0000250"/>
    <property type="project" value="UniProtKB"/>
</dbReference>
<dbReference type="GO" id="GO:0030155">
    <property type="term" value="P:regulation of cell adhesion"/>
    <property type="evidence" value="ECO:0000266"/>
    <property type="project" value="RGD"/>
</dbReference>
<dbReference type="GO" id="GO:0051302">
    <property type="term" value="P:regulation of cell division"/>
    <property type="evidence" value="ECO:0000250"/>
    <property type="project" value="UniProtKB"/>
</dbReference>
<dbReference type="GO" id="GO:0040008">
    <property type="term" value="P:regulation of growth"/>
    <property type="evidence" value="ECO:0000250"/>
    <property type="project" value="UniProtKB"/>
</dbReference>
<dbReference type="GO" id="GO:0050767">
    <property type="term" value="P:regulation of neurogenesis"/>
    <property type="evidence" value="ECO:0000250"/>
    <property type="project" value="UniProtKB"/>
</dbReference>
<dbReference type="GO" id="GO:0048631">
    <property type="term" value="P:regulation of skeletal muscle tissue growth"/>
    <property type="evidence" value="ECO:0000250"/>
    <property type="project" value="UniProtKB"/>
</dbReference>
<dbReference type="GO" id="GO:0014807">
    <property type="term" value="P:regulation of somitogenesis"/>
    <property type="evidence" value="ECO:0000250"/>
    <property type="project" value="UniProtKB"/>
</dbReference>
<dbReference type="GO" id="GO:0030947">
    <property type="term" value="P:regulation of vascular endothelial growth factor receptor signaling pathway"/>
    <property type="evidence" value="ECO:0000266"/>
    <property type="project" value="RGD"/>
</dbReference>
<dbReference type="GO" id="GO:1900746">
    <property type="term" value="P:regulation of vascular endothelial growth factor signaling pathway"/>
    <property type="evidence" value="ECO:0000250"/>
    <property type="project" value="UniProtKB"/>
</dbReference>
<dbReference type="GO" id="GO:0060041">
    <property type="term" value="P:retina development in camera-type eye"/>
    <property type="evidence" value="ECO:0000250"/>
    <property type="project" value="UniProtKB"/>
</dbReference>
<dbReference type="GO" id="GO:0060042">
    <property type="term" value="P:retina morphogenesis in camera-type eye"/>
    <property type="evidence" value="ECO:0000250"/>
    <property type="project" value="UniProtKB"/>
</dbReference>
<dbReference type="GO" id="GO:0048630">
    <property type="term" value="P:skeletal muscle tissue growth"/>
    <property type="evidence" value="ECO:0000250"/>
    <property type="project" value="UniProtKB"/>
</dbReference>
<dbReference type="GO" id="GO:0098773">
    <property type="term" value="P:skin epidermis development"/>
    <property type="evidence" value="ECO:0000250"/>
    <property type="project" value="UniProtKB"/>
</dbReference>
<dbReference type="GO" id="GO:0001757">
    <property type="term" value="P:somite specification"/>
    <property type="evidence" value="ECO:0000266"/>
    <property type="project" value="RGD"/>
</dbReference>
<dbReference type="GO" id="GO:0001756">
    <property type="term" value="P:somitogenesis"/>
    <property type="evidence" value="ECO:0000250"/>
    <property type="project" value="UniProtKB"/>
</dbReference>
<dbReference type="GO" id="GO:0021510">
    <property type="term" value="P:spinal cord development"/>
    <property type="evidence" value="ECO:0000250"/>
    <property type="project" value="UniProtKB"/>
</dbReference>
<dbReference type="GO" id="GO:0003323">
    <property type="term" value="P:type B pancreatic cell development"/>
    <property type="evidence" value="ECO:0000250"/>
    <property type="project" value="UniProtKB"/>
</dbReference>
<dbReference type="CDD" id="cd00054">
    <property type="entry name" value="EGF_CA"/>
    <property type="match status" value="6"/>
</dbReference>
<dbReference type="FunFam" id="2.10.25.10:FF:000018">
    <property type="entry name" value="Delta-like 1"/>
    <property type="match status" value="1"/>
</dbReference>
<dbReference type="FunFam" id="2.10.25.10:FF:000012">
    <property type="entry name" value="Delta-like protein"/>
    <property type="match status" value="4"/>
</dbReference>
<dbReference type="FunFam" id="2.10.25.10:FF:000064">
    <property type="entry name" value="Delta-like protein"/>
    <property type="match status" value="1"/>
</dbReference>
<dbReference type="FunFam" id="2.10.25.140:FF:000001">
    <property type="entry name" value="Delta-like protein"/>
    <property type="match status" value="1"/>
</dbReference>
<dbReference type="FunFam" id="2.60.40.3510:FF:000002">
    <property type="entry name" value="Delta-like protein"/>
    <property type="match status" value="1"/>
</dbReference>
<dbReference type="FunFam" id="2.10.25.10:FF:000004">
    <property type="entry name" value="Neurogenic locus notch 1"/>
    <property type="match status" value="1"/>
</dbReference>
<dbReference type="Gene3D" id="2.10.25.140">
    <property type="match status" value="1"/>
</dbReference>
<dbReference type="Gene3D" id="2.60.40.3510">
    <property type="match status" value="1"/>
</dbReference>
<dbReference type="Gene3D" id="2.10.25.10">
    <property type="entry name" value="Laminin"/>
    <property type="match status" value="7"/>
</dbReference>
<dbReference type="InterPro" id="IPR001774">
    <property type="entry name" value="DSL"/>
</dbReference>
<dbReference type="InterPro" id="IPR001881">
    <property type="entry name" value="EGF-like_Ca-bd_dom"/>
</dbReference>
<dbReference type="InterPro" id="IPR000742">
    <property type="entry name" value="EGF-like_dom"/>
</dbReference>
<dbReference type="InterPro" id="IPR000152">
    <property type="entry name" value="EGF-type_Asp/Asn_hydroxyl_site"/>
</dbReference>
<dbReference type="InterPro" id="IPR018097">
    <property type="entry name" value="EGF_Ca-bd_CS"/>
</dbReference>
<dbReference type="InterPro" id="IPR009030">
    <property type="entry name" value="Growth_fac_rcpt_cys_sf"/>
</dbReference>
<dbReference type="InterPro" id="IPR011651">
    <property type="entry name" value="Notch_ligand_N"/>
</dbReference>
<dbReference type="PANTHER" id="PTHR12916">
    <property type="entry name" value="CYTOCHROME C OXIDASE POLYPEPTIDE VIC-2"/>
    <property type="match status" value="1"/>
</dbReference>
<dbReference type="PANTHER" id="PTHR12916:SF4">
    <property type="entry name" value="UNINFLATABLE, ISOFORM C"/>
    <property type="match status" value="1"/>
</dbReference>
<dbReference type="Pfam" id="PF01414">
    <property type="entry name" value="DSL"/>
    <property type="match status" value="1"/>
</dbReference>
<dbReference type="Pfam" id="PF00008">
    <property type="entry name" value="EGF"/>
    <property type="match status" value="6"/>
</dbReference>
<dbReference type="Pfam" id="PF21700">
    <property type="entry name" value="EGF_DL_JAG"/>
    <property type="match status" value="1"/>
</dbReference>
<dbReference type="Pfam" id="PF07657">
    <property type="entry name" value="MNNL"/>
    <property type="match status" value="1"/>
</dbReference>
<dbReference type="PRINTS" id="PR00010">
    <property type="entry name" value="EGFBLOOD"/>
</dbReference>
<dbReference type="SMART" id="SM00051">
    <property type="entry name" value="DSL"/>
    <property type="match status" value="1"/>
</dbReference>
<dbReference type="SMART" id="SM00181">
    <property type="entry name" value="EGF"/>
    <property type="match status" value="8"/>
</dbReference>
<dbReference type="SMART" id="SM00179">
    <property type="entry name" value="EGF_CA"/>
    <property type="match status" value="6"/>
</dbReference>
<dbReference type="SUPFAM" id="SSF57196">
    <property type="entry name" value="EGF/Laminin"/>
    <property type="match status" value="3"/>
</dbReference>
<dbReference type="SUPFAM" id="SSF57184">
    <property type="entry name" value="Growth factor receptor domain"/>
    <property type="match status" value="1"/>
</dbReference>
<dbReference type="PROSITE" id="PS00010">
    <property type="entry name" value="ASX_HYDROXYL"/>
    <property type="match status" value="3"/>
</dbReference>
<dbReference type="PROSITE" id="PS51051">
    <property type="entry name" value="DSL"/>
    <property type="match status" value="1"/>
</dbReference>
<dbReference type="PROSITE" id="PS00022">
    <property type="entry name" value="EGF_1"/>
    <property type="match status" value="8"/>
</dbReference>
<dbReference type="PROSITE" id="PS01186">
    <property type="entry name" value="EGF_2"/>
    <property type="match status" value="8"/>
</dbReference>
<dbReference type="PROSITE" id="PS50026">
    <property type="entry name" value="EGF_3"/>
    <property type="match status" value="7"/>
</dbReference>
<dbReference type="PROSITE" id="PS01187">
    <property type="entry name" value="EGF_CA"/>
    <property type="match status" value="2"/>
</dbReference>
<gene>
    <name type="primary">Dll1</name>
</gene>
<evidence type="ECO:0000250" key="1"/>
<evidence type="ECO:0000250" key="2">
    <source>
        <dbReference type="UniProtKB" id="O00548"/>
    </source>
</evidence>
<evidence type="ECO:0000250" key="3">
    <source>
        <dbReference type="UniProtKB" id="P10041"/>
    </source>
</evidence>
<evidence type="ECO:0000250" key="4">
    <source>
        <dbReference type="UniProtKB" id="Q61483"/>
    </source>
</evidence>
<evidence type="ECO:0000255" key="5"/>
<evidence type="ECO:0000255" key="6">
    <source>
        <dbReference type="PROSITE-ProRule" id="PRU00076"/>
    </source>
</evidence>
<evidence type="ECO:0000255" key="7">
    <source>
        <dbReference type="PROSITE-ProRule" id="PRU00377"/>
    </source>
</evidence>
<evidence type="ECO:0000256" key="8">
    <source>
        <dbReference type="SAM" id="MobiDB-lite"/>
    </source>
</evidence>
<evidence type="ECO:0000269" key="9">
    <source>
    </source>
</evidence>
<evidence type="ECO:0000269" key="10">
    <source>
    </source>
</evidence>
<evidence type="ECO:0000269" key="11">
    <source>
    </source>
</evidence>